<keyword id="KW-0067">ATP-binding</keyword>
<keyword id="KW-0963">Cytoplasm</keyword>
<keyword id="KW-0418">Kinase</keyword>
<keyword id="KW-0444">Lipid biosynthesis</keyword>
<keyword id="KW-0443">Lipid metabolism</keyword>
<keyword id="KW-0460">Magnesium</keyword>
<keyword id="KW-0479">Metal-binding</keyword>
<keyword id="KW-0547">Nucleotide-binding</keyword>
<keyword id="KW-0594">Phospholipid biosynthesis</keyword>
<keyword id="KW-1208">Phospholipid metabolism</keyword>
<keyword id="KW-1185">Reference proteome</keyword>
<keyword id="KW-0808">Transferase</keyword>
<name>YEGS_PSEPK</name>
<organism>
    <name type="scientific">Pseudomonas putida (strain ATCC 47054 / DSM 6125 / CFBP 8728 / NCIMB 11950 / KT2440)</name>
    <dbReference type="NCBI Taxonomy" id="160488"/>
    <lineage>
        <taxon>Bacteria</taxon>
        <taxon>Pseudomonadati</taxon>
        <taxon>Pseudomonadota</taxon>
        <taxon>Gammaproteobacteria</taxon>
        <taxon>Pseudomonadales</taxon>
        <taxon>Pseudomonadaceae</taxon>
        <taxon>Pseudomonas</taxon>
    </lineage>
</organism>
<feature type="chain" id="PRO_0000292151" description="Probable lipid kinase YegS-like">
    <location>
        <begin position="1"/>
        <end position="295"/>
    </location>
</feature>
<feature type="domain" description="DAGKc" evidence="1">
    <location>
        <begin position="1"/>
        <end position="129"/>
    </location>
</feature>
<feature type="active site" description="Proton acceptor" evidence="1">
    <location>
        <position position="264"/>
    </location>
</feature>
<feature type="binding site" evidence="1">
    <location>
        <position position="39"/>
    </location>
    <ligand>
        <name>ATP</name>
        <dbReference type="ChEBI" id="CHEBI:30616"/>
    </ligand>
</feature>
<feature type="binding site" evidence="1">
    <location>
        <begin position="65"/>
        <end position="71"/>
    </location>
    <ligand>
        <name>ATP</name>
        <dbReference type="ChEBI" id="CHEBI:30616"/>
    </ligand>
</feature>
<feature type="binding site" evidence="1">
    <location>
        <position position="92"/>
    </location>
    <ligand>
        <name>ATP</name>
        <dbReference type="ChEBI" id="CHEBI:30616"/>
    </ligand>
</feature>
<feature type="binding site" evidence="1">
    <location>
        <position position="210"/>
    </location>
    <ligand>
        <name>Mg(2+)</name>
        <dbReference type="ChEBI" id="CHEBI:18420"/>
    </ligand>
</feature>
<feature type="binding site" evidence="1">
    <location>
        <position position="213"/>
    </location>
    <ligand>
        <name>Mg(2+)</name>
        <dbReference type="ChEBI" id="CHEBI:18420"/>
    </ligand>
</feature>
<feature type="binding site" evidence="1">
    <location>
        <position position="215"/>
    </location>
    <ligand>
        <name>Mg(2+)</name>
        <dbReference type="ChEBI" id="CHEBI:18420"/>
    </ligand>
</feature>
<proteinExistence type="inferred from homology"/>
<gene>
    <name type="ordered locus">PP_2125</name>
</gene>
<comment type="function">
    <text evidence="1">Probably phosphorylates lipids; the in vivo substrate is unknown.</text>
</comment>
<comment type="cofactor">
    <cofactor evidence="1">
        <name>Mg(2+)</name>
        <dbReference type="ChEBI" id="CHEBI:18420"/>
    </cofactor>
    <cofactor evidence="1">
        <name>Ca(2+)</name>
        <dbReference type="ChEBI" id="CHEBI:29108"/>
    </cofactor>
    <text evidence="1">Binds 1 Mg(2+) ion per subunit. Ca(2+) may be able to substitute.</text>
</comment>
<comment type="subcellular location">
    <subcellularLocation>
        <location evidence="1">Cytoplasm</location>
    </subcellularLocation>
</comment>
<comment type="similarity">
    <text evidence="1">Belongs to the diacylglycerol/lipid kinase family. YegS lipid kinase subfamily.</text>
</comment>
<comment type="sequence caution" evidence="2">
    <conflict type="erroneous initiation">
        <sequence resource="EMBL-CDS" id="AAN67738"/>
    </conflict>
</comment>
<sequence>MQGRKAMLVLHGKQAMNEDVRSAVGDLRDSGWVLDVRVTWEAGDAQRLVAEALAAGYSHIVAGGGDGTLRDVAEAMGLAATQASLALLPLGTANDFAKAAGIPLEPASALALLNVAPQPIDLGQAGDQLFLNMATGGFGSQVTANTSEDLKKVLGAAAYLFTGLSRFSELQAASVELQGPGFHWQGDLLALGIGNGRQAGGGQVLCPEAMVNDGLLDVAILPAPQEVVGALRDLLGGDGLFVRARLPWVEIKSSQGLDINLDGEPLQAANLRFQARPAALHLHLPAGSPLLSHPG</sequence>
<reference key="1">
    <citation type="journal article" date="2002" name="Environ. Microbiol.">
        <title>Complete genome sequence and comparative analysis of the metabolically versatile Pseudomonas putida KT2440.</title>
        <authorList>
            <person name="Nelson K.E."/>
            <person name="Weinel C."/>
            <person name="Paulsen I.T."/>
            <person name="Dodson R.J."/>
            <person name="Hilbert H."/>
            <person name="Martins dos Santos V.A.P."/>
            <person name="Fouts D.E."/>
            <person name="Gill S.R."/>
            <person name="Pop M."/>
            <person name="Holmes M."/>
            <person name="Brinkac L.M."/>
            <person name="Beanan M.J."/>
            <person name="DeBoy R.T."/>
            <person name="Daugherty S.C."/>
            <person name="Kolonay J.F."/>
            <person name="Madupu R."/>
            <person name="Nelson W.C."/>
            <person name="White O."/>
            <person name="Peterson J.D."/>
            <person name="Khouri H.M."/>
            <person name="Hance I."/>
            <person name="Chris Lee P."/>
            <person name="Holtzapple E.K."/>
            <person name="Scanlan D."/>
            <person name="Tran K."/>
            <person name="Moazzez A."/>
            <person name="Utterback T.R."/>
            <person name="Rizzo M."/>
            <person name="Lee K."/>
            <person name="Kosack D."/>
            <person name="Moestl D."/>
            <person name="Wedler H."/>
            <person name="Lauber J."/>
            <person name="Stjepandic D."/>
            <person name="Hoheisel J."/>
            <person name="Straetz M."/>
            <person name="Heim S."/>
            <person name="Kiewitz C."/>
            <person name="Eisen J.A."/>
            <person name="Timmis K.N."/>
            <person name="Duesterhoeft A."/>
            <person name="Tuemmler B."/>
            <person name="Fraser C.M."/>
        </authorList>
    </citation>
    <scope>NUCLEOTIDE SEQUENCE [LARGE SCALE GENOMIC DNA]</scope>
    <source>
        <strain>ATCC 47054 / DSM 6125 / CFBP 8728 / NCIMB 11950 / KT2440</strain>
    </source>
</reference>
<protein>
    <recommendedName>
        <fullName evidence="1">Probable lipid kinase YegS-like</fullName>
        <ecNumber evidence="1">2.7.1.-</ecNumber>
    </recommendedName>
</protein>
<evidence type="ECO:0000255" key="1">
    <source>
        <dbReference type="HAMAP-Rule" id="MF_01377"/>
    </source>
</evidence>
<evidence type="ECO:0000305" key="2"/>
<dbReference type="EC" id="2.7.1.-" evidence="1"/>
<dbReference type="EMBL" id="AE015451">
    <property type="protein sequence ID" value="AAN67738.1"/>
    <property type="status" value="ALT_INIT"/>
    <property type="molecule type" value="Genomic_DNA"/>
</dbReference>
<dbReference type="RefSeq" id="NP_744274.3">
    <property type="nucleotide sequence ID" value="NC_002947.4"/>
</dbReference>
<dbReference type="SMR" id="Q88L12"/>
<dbReference type="STRING" id="160488.PP_2125"/>
<dbReference type="PaxDb" id="160488-PP_2125"/>
<dbReference type="KEGG" id="ppu:PP_2125"/>
<dbReference type="PATRIC" id="fig|160488.4.peg.2241"/>
<dbReference type="eggNOG" id="COG1597">
    <property type="taxonomic scope" value="Bacteria"/>
</dbReference>
<dbReference type="HOGENOM" id="CLU_045532_1_1_6"/>
<dbReference type="OrthoDB" id="142078at2"/>
<dbReference type="Proteomes" id="UP000000556">
    <property type="component" value="Chromosome"/>
</dbReference>
<dbReference type="GO" id="GO:0005737">
    <property type="term" value="C:cytoplasm"/>
    <property type="evidence" value="ECO:0007669"/>
    <property type="project" value="UniProtKB-SubCell"/>
</dbReference>
<dbReference type="GO" id="GO:0005886">
    <property type="term" value="C:plasma membrane"/>
    <property type="evidence" value="ECO:0007669"/>
    <property type="project" value="TreeGrafter"/>
</dbReference>
<dbReference type="GO" id="GO:0005524">
    <property type="term" value="F:ATP binding"/>
    <property type="evidence" value="ECO:0007669"/>
    <property type="project" value="UniProtKB-UniRule"/>
</dbReference>
<dbReference type="GO" id="GO:0001727">
    <property type="term" value="F:lipid kinase activity"/>
    <property type="evidence" value="ECO:0007669"/>
    <property type="project" value="UniProtKB-UniRule"/>
</dbReference>
<dbReference type="GO" id="GO:0000287">
    <property type="term" value="F:magnesium ion binding"/>
    <property type="evidence" value="ECO:0007669"/>
    <property type="project" value="UniProtKB-UniRule"/>
</dbReference>
<dbReference type="GO" id="GO:0008654">
    <property type="term" value="P:phospholipid biosynthetic process"/>
    <property type="evidence" value="ECO:0007669"/>
    <property type="project" value="UniProtKB-UniRule"/>
</dbReference>
<dbReference type="Gene3D" id="2.60.200.40">
    <property type="match status" value="1"/>
</dbReference>
<dbReference type="Gene3D" id="3.40.50.10330">
    <property type="entry name" value="Probable inorganic polyphosphate/atp-NAD kinase, domain 1"/>
    <property type="match status" value="1"/>
</dbReference>
<dbReference type="HAMAP" id="MF_01377">
    <property type="entry name" value="YegS"/>
    <property type="match status" value="1"/>
</dbReference>
<dbReference type="InterPro" id="IPR017438">
    <property type="entry name" value="ATP-NAD_kinase_N"/>
</dbReference>
<dbReference type="InterPro" id="IPR005218">
    <property type="entry name" value="Diacylglycerol/lipid_kinase"/>
</dbReference>
<dbReference type="InterPro" id="IPR001206">
    <property type="entry name" value="Diacylglycerol_kinase_cat_dom"/>
</dbReference>
<dbReference type="InterPro" id="IPR022433">
    <property type="entry name" value="Lip_kinase_YegS"/>
</dbReference>
<dbReference type="InterPro" id="IPR050187">
    <property type="entry name" value="Lipid_Phosphate_FormReg"/>
</dbReference>
<dbReference type="InterPro" id="IPR016064">
    <property type="entry name" value="NAD/diacylglycerol_kinase_sf"/>
</dbReference>
<dbReference type="InterPro" id="IPR045540">
    <property type="entry name" value="YegS/DAGK_C"/>
</dbReference>
<dbReference type="NCBIfam" id="TIGR03702">
    <property type="entry name" value="lip_kinase_YegS"/>
    <property type="match status" value="1"/>
</dbReference>
<dbReference type="NCBIfam" id="NF009602">
    <property type="entry name" value="PRK13054.1"/>
    <property type="match status" value="1"/>
</dbReference>
<dbReference type="NCBIfam" id="TIGR00147">
    <property type="entry name" value="YegS/Rv2252/BmrU family lipid kinase"/>
    <property type="match status" value="1"/>
</dbReference>
<dbReference type="PANTHER" id="PTHR12358:SF106">
    <property type="entry name" value="LIPID KINASE YEGS"/>
    <property type="match status" value="1"/>
</dbReference>
<dbReference type="PANTHER" id="PTHR12358">
    <property type="entry name" value="SPHINGOSINE KINASE"/>
    <property type="match status" value="1"/>
</dbReference>
<dbReference type="Pfam" id="PF00781">
    <property type="entry name" value="DAGK_cat"/>
    <property type="match status" value="1"/>
</dbReference>
<dbReference type="Pfam" id="PF19279">
    <property type="entry name" value="YegS_C"/>
    <property type="match status" value="1"/>
</dbReference>
<dbReference type="SMART" id="SM00046">
    <property type="entry name" value="DAGKc"/>
    <property type="match status" value="1"/>
</dbReference>
<dbReference type="SUPFAM" id="SSF111331">
    <property type="entry name" value="NAD kinase/diacylglycerol kinase-like"/>
    <property type="match status" value="1"/>
</dbReference>
<dbReference type="PROSITE" id="PS50146">
    <property type="entry name" value="DAGK"/>
    <property type="match status" value="1"/>
</dbReference>
<accession>Q88L12</accession>